<dbReference type="EC" id="2.7.7.80" evidence="3"/>
<dbReference type="EC" id="2.8.1.11" evidence="3"/>
<dbReference type="EMBL" id="AF055287">
    <property type="protein sequence ID" value="AAC24520.1"/>
    <property type="status" value="ALT_INIT"/>
    <property type="molecule type" value="Genomic_DNA"/>
</dbReference>
<dbReference type="EMBL" id="AACD01000038">
    <property type="protein sequence ID" value="EAA64438.1"/>
    <property type="status" value="ALT_INIT"/>
    <property type="molecule type" value="Genomic_DNA"/>
</dbReference>
<dbReference type="EMBL" id="BN001307">
    <property type="protein sequence ID" value="CBF86614.1"/>
    <property type="status" value="ALT_INIT"/>
    <property type="molecule type" value="Genomic_DNA"/>
</dbReference>
<dbReference type="RefSeq" id="XP_659931.1">
    <property type="nucleotide sequence ID" value="XM_654839.1"/>
</dbReference>
<dbReference type="SMR" id="O59954"/>
<dbReference type="FunCoup" id="O59954">
    <property type="interactions" value="847"/>
</dbReference>
<dbReference type="STRING" id="227321.O59954"/>
<dbReference type="KEGG" id="ani:ANIA_02327"/>
<dbReference type="eggNOG" id="KOG2017">
    <property type="taxonomic scope" value="Eukaryota"/>
</dbReference>
<dbReference type="HOGENOM" id="CLU_013325_1_2_1"/>
<dbReference type="InParanoid" id="O59954"/>
<dbReference type="OrthoDB" id="10261062at2759"/>
<dbReference type="UniPathway" id="UPA00344"/>
<dbReference type="UniPathway" id="UPA00988"/>
<dbReference type="Proteomes" id="UP000000560">
    <property type="component" value="Chromosome VII"/>
</dbReference>
<dbReference type="GO" id="GO:0005737">
    <property type="term" value="C:cytoplasm"/>
    <property type="evidence" value="ECO:0000318"/>
    <property type="project" value="GO_Central"/>
</dbReference>
<dbReference type="GO" id="GO:0005829">
    <property type="term" value="C:cytosol"/>
    <property type="evidence" value="ECO:0007669"/>
    <property type="project" value="InterPro"/>
</dbReference>
<dbReference type="GO" id="GO:0005524">
    <property type="term" value="F:ATP binding"/>
    <property type="evidence" value="ECO:0007669"/>
    <property type="project" value="UniProtKB-KW"/>
</dbReference>
<dbReference type="GO" id="GO:0046872">
    <property type="term" value="F:metal ion binding"/>
    <property type="evidence" value="ECO:0007669"/>
    <property type="project" value="UniProtKB-KW"/>
</dbReference>
<dbReference type="GO" id="GO:0061605">
    <property type="term" value="F:molybdopterin-synthase adenylyltransferase activity"/>
    <property type="evidence" value="ECO:0007669"/>
    <property type="project" value="UniProtKB-EC"/>
</dbReference>
<dbReference type="GO" id="GO:0061604">
    <property type="term" value="F:molybdopterin-synthase sulfurtransferase activity"/>
    <property type="evidence" value="ECO:0007669"/>
    <property type="project" value="UniProtKB-EC"/>
</dbReference>
<dbReference type="GO" id="GO:0016779">
    <property type="term" value="F:nucleotidyltransferase activity"/>
    <property type="evidence" value="ECO:0000318"/>
    <property type="project" value="GO_Central"/>
</dbReference>
<dbReference type="GO" id="GO:0004792">
    <property type="term" value="F:thiosulfate-cyanide sulfurtransferase activity"/>
    <property type="evidence" value="ECO:0000318"/>
    <property type="project" value="GO_Central"/>
</dbReference>
<dbReference type="GO" id="GO:0042292">
    <property type="term" value="F:URM1 activating enzyme activity"/>
    <property type="evidence" value="ECO:0000318"/>
    <property type="project" value="GO_Central"/>
</dbReference>
<dbReference type="GO" id="GO:0006777">
    <property type="term" value="P:Mo-molybdopterin cofactor biosynthetic process"/>
    <property type="evidence" value="ECO:0007669"/>
    <property type="project" value="UniProtKB-UniRule"/>
</dbReference>
<dbReference type="GO" id="GO:0032447">
    <property type="term" value="P:protein urmylation"/>
    <property type="evidence" value="ECO:0000318"/>
    <property type="project" value="GO_Central"/>
</dbReference>
<dbReference type="GO" id="GO:0002143">
    <property type="term" value="P:tRNA wobble position uridine thiolation"/>
    <property type="evidence" value="ECO:0000318"/>
    <property type="project" value="GO_Central"/>
</dbReference>
<dbReference type="CDD" id="cd01526">
    <property type="entry name" value="RHOD_ThiF"/>
    <property type="match status" value="1"/>
</dbReference>
<dbReference type="CDD" id="cd00757">
    <property type="entry name" value="ThiF_MoeB_HesA_family"/>
    <property type="match status" value="1"/>
</dbReference>
<dbReference type="FunFam" id="3.40.50.720:FF:000033">
    <property type="entry name" value="Adenylyltransferase and sulfurtransferase MOCS3"/>
    <property type="match status" value="1"/>
</dbReference>
<dbReference type="FunFam" id="3.40.250.10:FF:000096">
    <property type="entry name" value="Adenylyltransferase and sulfurtransferase uba4"/>
    <property type="match status" value="1"/>
</dbReference>
<dbReference type="Gene3D" id="3.40.50.720">
    <property type="entry name" value="NAD(P)-binding Rossmann-like Domain"/>
    <property type="match status" value="1"/>
</dbReference>
<dbReference type="Gene3D" id="3.40.250.10">
    <property type="entry name" value="Rhodanese-like domain"/>
    <property type="match status" value="1"/>
</dbReference>
<dbReference type="HAMAP" id="MF_03049">
    <property type="entry name" value="MOCS3_Uba4"/>
    <property type="match status" value="1"/>
</dbReference>
<dbReference type="InterPro" id="IPR028885">
    <property type="entry name" value="MOCS3/Uba4"/>
</dbReference>
<dbReference type="InterPro" id="IPR001763">
    <property type="entry name" value="Rhodanese-like_dom"/>
</dbReference>
<dbReference type="InterPro" id="IPR036873">
    <property type="entry name" value="Rhodanese-like_dom_sf"/>
</dbReference>
<dbReference type="InterPro" id="IPR045886">
    <property type="entry name" value="ThiF/MoeB/HesA"/>
</dbReference>
<dbReference type="InterPro" id="IPR000594">
    <property type="entry name" value="ThiF_NAD_FAD-bd"/>
</dbReference>
<dbReference type="InterPro" id="IPR035985">
    <property type="entry name" value="Ubiquitin-activating_enz"/>
</dbReference>
<dbReference type="PANTHER" id="PTHR10953:SF102">
    <property type="entry name" value="ADENYLYLTRANSFERASE AND SULFURTRANSFERASE MOCS3"/>
    <property type="match status" value="1"/>
</dbReference>
<dbReference type="PANTHER" id="PTHR10953">
    <property type="entry name" value="UBIQUITIN-ACTIVATING ENZYME E1"/>
    <property type="match status" value="1"/>
</dbReference>
<dbReference type="Pfam" id="PF00581">
    <property type="entry name" value="Rhodanese"/>
    <property type="match status" value="1"/>
</dbReference>
<dbReference type="Pfam" id="PF00899">
    <property type="entry name" value="ThiF"/>
    <property type="match status" value="1"/>
</dbReference>
<dbReference type="SMART" id="SM00450">
    <property type="entry name" value="RHOD"/>
    <property type="match status" value="1"/>
</dbReference>
<dbReference type="SUPFAM" id="SSF69572">
    <property type="entry name" value="Activating enzymes of the ubiquitin-like proteins"/>
    <property type="match status" value="1"/>
</dbReference>
<dbReference type="PROSITE" id="PS50206">
    <property type="entry name" value="RHODANESE_3"/>
    <property type="match status" value="1"/>
</dbReference>
<keyword id="KW-0067">ATP-binding</keyword>
<keyword id="KW-0963">Cytoplasm</keyword>
<keyword id="KW-0479">Metal-binding</keyword>
<keyword id="KW-0501">Molybdenum cofactor biosynthesis</keyword>
<keyword id="KW-0511">Multifunctional enzyme</keyword>
<keyword id="KW-0547">Nucleotide-binding</keyword>
<keyword id="KW-0548">Nucleotidyltransferase</keyword>
<keyword id="KW-1185">Reference proteome</keyword>
<keyword id="KW-0808">Transferase</keyword>
<keyword id="KW-0819">tRNA processing</keyword>
<keyword id="KW-0833">Ubl conjugation pathway</keyword>
<keyword id="KW-0862">Zinc</keyword>
<sequence>MEDLETRCASLRTEIAAAEAQLTKLKRELHEAEGAALRAQSQKTASANATTGQRTKSKWPLHGEEYRRYGRQMIVPQFGLQGQLKLRDAKVLIVGAGGLGCPAALYLAGAGVGTIGLVDGDTVEASNLHRQVLHRSRNVGKLKVDSAIEYLRELNPHPTYIAHQAHLTPREAPDIFKDYDLILDCTDNPATRYLISDTAVLLGKPLVSASALRTEGQLMVLNNPPQPPGDKTGGPCYRCVFPKPPPANSVTSCADGGILGPVVGTMGVLQASEAIKVLTSAGESVEATPPSLLIFSAYSSPQFRTIKLRSRRPNCAVCSAEATVTLESVRSGSMDYVFFCGTVDPADILSPEERISPSEYGNVDSAGAQRHIIDVREKVQFDICSLENSINIPMSTILASAYSAPTLDADEPKRLPSWLPPEVAHESNKPIYVVCRQGNDSQTVVRKLKELGLDHGGERPVVDIKGGFRSWREQVDPDWPDY</sequence>
<gene>
    <name evidence="3" type="primary">uba4</name>
    <name evidence="3" type="synonym">cnxF</name>
    <name type="ORF">AN2327</name>
</gene>
<organism>
    <name type="scientific">Emericella nidulans (strain FGSC A4 / ATCC 38163 / CBS 112.46 / NRRL 194 / M139)</name>
    <name type="common">Aspergillus nidulans</name>
    <dbReference type="NCBI Taxonomy" id="227321"/>
    <lineage>
        <taxon>Eukaryota</taxon>
        <taxon>Fungi</taxon>
        <taxon>Dikarya</taxon>
        <taxon>Ascomycota</taxon>
        <taxon>Pezizomycotina</taxon>
        <taxon>Eurotiomycetes</taxon>
        <taxon>Eurotiomycetidae</taxon>
        <taxon>Eurotiales</taxon>
        <taxon>Aspergillaceae</taxon>
        <taxon>Aspergillus</taxon>
        <taxon>Aspergillus subgen. Nidulantes</taxon>
    </lineage>
</organism>
<feature type="chain" id="PRO_0000369226" description="Adenylyltransferase and sulfurtransferase uba4">
    <location>
        <begin position="1"/>
        <end position="482"/>
    </location>
</feature>
<feature type="domain" description="Rhodanese" evidence="3">
    <location>
        <begin position="366"/>
        <end position="480"/>
    </location>
</feature>
<feature type="region of interest" description="Disordered" evidence="4">
    <location>
        <begin position="33"/>
        <end position="57"/>
    </location>
</feature>
<feature type="compositionally biased region" description="Polar residues" evidence="4">
    <location>
        <begin position="39"/>
        <end position="54"/>
    </location>
</feature>
<feature type="active site" description="Glycyl thioester intermediate; for adenylyltransferase activity" evidence="3">
    <location>
        <position position="253"/>
    </location>
</feature>
<feature type="active site" description="Cysteine persulfide intermediate; for sulfurtransferase activity" evidence="3">
    <location>
        <position position="435"/>
    </location>
</feature>
<feature type="binding site" evidence="3">
    <location>
        <position position="98"/>
    </location>
    <ligand>
        <name>ATP</name>
        <dbReference type="ChEBI" id="CHEBI:30616"/>
    </ligand>
</feature>
<feature type="binding site" evidence="3">
    <location>
        <position position="119"/>
    </location>
    <ligand>
        <name>ATP</name>
        <dbReference type="ChEBI" id="CHEBI:30616"/>
    </ligand>
</feature>
<feature type="binding site" evidence="3">
    <location>
        <begin position="126"/>
        <end position="130"/>
    </location>
    <ligand>
        <name>ATP</name>
        <dbReference type="ChEBI" id="CHEBI:30616"/>
    </ligand>
</feature>
<feature type="binding site" evidence="3">
    <location>
        <position position="143"/>
    </location>
    <ligand>
        <name>ATP</name>
        <dbReference type="ChEBI" id="CHEBI:30616"/>
    </ligand>
</feature>
<feature type="binding site" evidence="3">
    <location>
        <begin position="187"/>
        <end position="188"/>
    </location>
    <ligand>
        <name>ATP</name>
        <dbReference type="ChEBI" id="CHEBI:30616"/>
    </ligand>
</feature>
<feature type="binding site" evidence="3">
    <location>
        <position position="236"/>
    </location>
    <ligand>
        <name>Zn(2+)</name>
        <dbReference type="ChEBI" id="CHEBI:29105"/>
    </ligand>
</feature>
<feature type="binding site" evidence="3">
    <location>
        <position position="239"/>
    </location>
    <ligand>
        <name>Zn(2+)</name>
        <dbReference type="ChEBI" id="CHEBI:29105"/>
    </ligand>
</feature>
<feature type="binding site" evidence="3">
    <location>
        <position position="315"/>
    </location>
    <ligand>
        <name>Zn(2+)</name>
        <dbReference type="ChEBI" id="CHEBI:29105"/>
    </ligand>
</feature>
<feature type="binding site" evidence="3">
    <location>
        <position position="318"/>
    </location>
    <ligand>
        <name>Zn(2+)</name>
        <dbReference type="ChEBI" id="CHEBI:29105"/>
    </ligand>
</feature>
<feature type="mutagenesis site" description="In cnxF21ts and cnxF24ts; temperature-sensitive mutant. Impairs molybdopterin biosynthesis." evidence="5">
    <original>G</original>
    <variation>D</variation>
    <location>
        <position position="82"/>
    </location>
</feature>
<feature type="mutagenesis site" description="In cnxF1285; impairs molybdopterin biosynthesis." evidence="5">
    <original>G</original>
    <variation>S</variation>
    <location>
        <position position="100"/>
    </location>
</feature>
<feature type="mutagenesis site" description="In cnxF200; impairs molybdopterin biosynthesis." evidence="5">
    <original>R</original>
    <variation>Q</variation>
    <location>
        <position position="130"/>
    </location>
</feature>
<feature type="mutagenesis site" description="In cnxF472; impairs molybdopterin biosynthesis." evidence="5">
    <original>C</original>
    <variation>Y</variation>
    <location>
        <position position="185"/>
    </location>
</feature>
<feature type="mutagenesis site" description="In cnxF119; impairs molybdopterin biosynthesis." evidence="5">
    <original>E</original>
    <variation>K</variation>
    <location>
        <position position="215"/>
    </location>
</feature>
<feature type="mutagenesis site" description="In cnxF142ts; temperature-sensitive mutant. Impairs molybdopterin biosynthesis." evidence="5">
    <original>G</original>
    <variation>S</variation>
    <location>
        <position position="264"/>
    </location>
</feature>
<name>UBA4_EMENI</name>
<accession>O59954</accession>
<accession>C8VNC5</accession>
<accession>Q5BAV3</accession>
<proteinExistence type="evidence at protein level"/>
<evidence type="ECO:0000250" key="1">
    <source>
        <dbReference type="UniProtKB" id="O95396"/>
    </source>
</evidence>
<evidence type="ECO:0000250" key="2">
    <source>
        <dbReference type="UniProtKB" id="P38820"/>
    </source>
</evidence>
<evidence type="ECO:0000255" key="3">
    <source>
        <dbReference type="HAMAP-Rule" id="MF_03049"/>
    </source>
</evidence>
<evidence type="ECO:0000256" key="4">
    <source>
        <dbReference type="SAM" id="MobiDB-lite"/>
    </source>
</evidence>
<evidence type="ECO:0000269" key="5">
    <source>
    </source>
</evidence>
<evidence type="ECO:0000305" key="6"/>
<reference key="1">
    <citation type="journal article" date="1998" name="J. Biol. Chem.">
        <title>The Aspergillus nidulans cnxF gene and its involvement in molybdopterin biosynthesis. Molecular characterization and analysis of in vivo generated mutants.</title>
        <authorList>
            <person name="Appleyard M.V.C.L."/>
            <person name="Sloan J."/>
            <person name="Kana'n G.J.M."/>
            <person name="Heck I.S."/>
            <person name="Kinghorn J.R."/>
            <person name="Unkles S.E."/>
        </authorList>
    </citation>
    <scope>NUCLEOTIDE SEQUENCE [GENOMIC DNA]</scope>
    <scope>FUNCTION IN BIOSYNTHESIS OF THE MOLYBDENUM COFACTOR</scope>
    <scope>MUTAGENESIS OF GLY-82; GLY-100; ARG-130; CYS-185; GLU-215 AND GLY-264</scope>
</reference>
<reference key="2">
    <citation type="journal article" date="2005" name="Nature">
        <title>Sequencing of Aspergillus nidulans and comparative analysis with A. fumigatus and A. oryzae.</title>
        <authorList>
            <person name="Galagan J.E."/>
            <person name="Calvo S.E."/>
            <person name="Cuomo C."/>
            <person name="Ma L.-J."/>
            <person name="Wortman J.R."/>
            <person name="Batzoglou S."/>
            <person name="Lee S.-I."/>
            <person name="Bastuerkmen M."/>
            <person name="Spevak C.C."/>
            <person name="Clutterbuck J."/>
            <person name="Kapitonov V."/>
            <person name="Jurka J."/>
            <person name="Scazzocchio C."/>
            <person name="Farman M.L."/>
            <person name="Butler J."/>
            <person name="Purcell S."/>
            <person name="Harris S."/>
            <person name="Braus G.H."/>
            <person name="Draht O."/>
            <person name="Busch S."/>
            <person name="D'Enfert C."/>
            <person name="Bouchier C."/>
            <person name="Goldman G.H."/>
            <person name="Bell-Pedersen D."/>
            <person name="Griffiths-Jones S."/>
            <person name="Doonan J.H."/>
            <person name="Yu J."/>
            <person name="Vienken K."/>
            <person name="Pain A."/>
            <person name="Freitag M."/>
            <person name="Selker E.U."/>
            <person name="Archer D.B."/>
            <person name="Penalva M.A."/>
            <person name="Oakley B.R."/>
            <person name="Momany M."/>
            <person name="Tanaka T."/>
            <person name="Kumagai T."/>
            <person name="Asai K."/>
            <person name="Machida M."/>
            <person name="Nierman W.C."/>
            <person name="Denning D.W."/>
            <person name="Caddick M.X."/>
            <person name="Hynes M."/>
            <person name="Paoletti M."/>
            <person name="Fischer R."/>
            <person name="Miller B.L."/>
            <person name="Dyer P.S."/>
            <person name="Sachs M.S."/>
            <person name="Osmani S.A."/>
            <person name="Birren B.W."/>
        </authorList>
    </citation>
    <scope>NUCLEOTIDE SEQUENCE [LARGE SCALE GENOMIC DNA]</scope>
    <source>
        <strain>FGSC A4 / ATCC 38163 / CBS 112.46 / NRRL 194 / M139</strain>
    </source>
</reference>
<reference key="3">
    <citation type="journal article" date="2009" name="Fungal Genet. Biol.">
        <title>The 2008 update of the Aspergillus nidulans genome annotation: a community effort.</title>
        <authorList>
            <person name="Wortman J.R."/>
            <person name="Gilsenan J.M."/>
            <person name="Joardar V."/>
            <person name="Deegan J."/>
            <person name="Clutterbuck J."/>
            <person name="Andersen M.R."/>
            <person name="Archer D."/>
            <person name="Bencina M."/>
            <person name="Braus G."/>
            <person name="Coutinho P."/>
            <person name="von Dohren H."/>
            <person name="Doonan J."/>
            <person name="Driessen A.J."/>
            <person name="Durek P."/>
            <person name="Espeso E."/>
            <person name="Fekete E."/>
            <person name="Flipphi M."/>
            <person name="Estrada C.G."/>
            <person name="Geysens S."/>
            <person name="Goldman G."/>
            <person name="de Groot P.W."/>
            <person name="Hansen K."/>
            <person name="Harris S.D."/>
            <person name="Heinekamp T."/>
            <person name="Helmstaedt K."/>
            <person name="Henrissat B."/>
            <person name="Hofmann G."/>
            <person name="Homan T."/>
            <person name="Horio T."/>
            <person name="Horiuchi H."/>
            <person name="James S."/>
            <person name="Jones M."/>
            <person name="Karaffa L."/>
            <person name="Karanyi Z."/>
            <person name="Kato M."/>
            <person name="Keller N."/>
            <person name="Kelly D.E."/>
            <person name="Kiel J.A."/>
            <person name="Kim J.M."/>
            <person name="van der Klei I.J."/>
            <person name="Klis F.M."/>
            <person name="Kovalchuk A."/>
            <person name="Krasevec N."/>
            <person name="Kubicek C.P."/>
            <person name="Liu B."/>
            <person name="Maccabe A."/>
            <person name="Meyer V."/>
            <person name="Mirabito P."/>
            <person name="Miskei M."/>
            <person name="Mos M."/>
            <person name="Mullins J."/>
            <person name="Nelson D.R."/>
            <person name="Nielsen J."/>
            <person name="Oakley B.R."/>
            <person name="Osmani S.A."/>
            <person name="Pakula T."/>
            <person name="Paszewski A."/>
            <person name="Paulsen I."/>
            <person name="Pilsyk S."/>
            <person name="Pocsi I."/>
            <person name="Punt P.J."/>
            <person name="Ram A.F."/>
            <person name="Ren Q."/>
            <person name="Robellet X."/>
            <person name="Robson G."/>
            <person name="Seiboth B."/>
            <person name="van Solingen P."/>
            <person name="Specht T."/>
            <person name="Sun J."/>
            <person name="Taheri-Talesh N."/>
            <person name="Takeshita N."/>
            <person name="Ussery D."/>
            <person name="vanKuyk P.A."/>
            <person name="Visser H."/>
            <person name="van de Vondervoort P.J."/>
            <person name="de Vries R.P."/>
            <person name="Walton J."/>
            <person name="Xiang X."/>
            <person name="Xiong Y."/>
            <person name="Zeng A.P."/>
            <person name="Brandt B.W."/>
            <person name="Cornell M.J."/>
            <person name="van den Hondel C.A."/>
            <person name="Visser J."/>
            <person name="Oliver S.G."/>
            <person name="Turner G."/>
        </authorList>
    </citation>
    <scope>GENOME REANNOTATION</scope>
    <source>
        <strain>FGSC A4 / ATCC 38163 / CBS 112.46 / NRRL 194 / M139</strain>
    </source>
</reference>
<comment type="function">
    <text evidence="1 5">Plays a central role in 2-thiolation of mcm(5)S(2)U at tRNA wobble positions of cytosolic tRNA(Lys), tRNA(Glu) and tRNA(Gln) (By similarity). Also essential during biosynthesis of the molybdenum cofactor (PubMed:9614089). Acts by mediating the C-terminal thiocarboxylation of sulfur carriers urm1 and mocs2a (By similarity). Its N-terminus first activates urm1 and mocs2a as acyl-adenylates (-COAMP), then the persulfide sulfur on the catalytic cysteine is transferred to urm1 and mocs2a to form thiocarboxylation (-COSH) of their C-terminus. The reaction probably involves hydrogen sulfide that is generated from the persulfide intermediate and that acts as a nucleophile towards urm1 and mocs2a. Subsequently, a transient disulfide bond is formed. Does not use thiosulfate as sulfur donor; nfs1 probably acting as a sulfur donor for thiocarboxylation reactions (By similarity).</text>
</comment>
<comment type="catalytic activity">
    <reaction evidence="3">
        <text>[molybdopterin-synthase sulfur-carrier protein]-C-terminal Gly-Gly + ATP + H(+) = [molybdopterin-synthase sulfur-carrier protein]-C-terminal Gly-Gly-AMP + diphosphate</text>
        <dbReference type="Rhea" id="RHEA:43616"/>
        <dbReference type="Rhea" id="RHEA-COMP:12159"/>
        <dbReference type="Rhea" id="RHEA-COMP:12202"/>
        <dbReference type="ChEBI" id="CHEBI:15378"/>
        <dbReference type="ChEBI" id="CHEBI:30616"/>
        <dbReference type="ChEBI" id="CHEBI:33019"/>
        <dbReference type="ChEBI" id="CHEBI:90618"/>
        <dbReference type="ChEBI" id="CHEBI:90778"/>
        <dbReference type="EC" id="2.7.7.80"/>
    </reaction>
</comment>
<comment type="catalytic activity">
    <reaction evidence="3">
        <text>[molybdopterin-synthase sulfur-carrier protein]-C-terminal Gly-Gly-AMP + S-sulfanyl-L-cysteinyl-[cysteine desulfurase] + AH2 = [molybdopterin-synthase sulfur-carrier protein]-C-terminal-Gly-aminoethanethioate + L-cysteinyl-[cysteine desulfurase] + A + AMP + 2 H(+)</text>
        <dbReference type="Rhea" id="RHEA:48612"/>
        <dbReference type="Rhea" id="RHEA-COMP:12157"/>
        <dbReference type="Rhea" id="RHEA-COMP:12158"/>
        <dbReference type="Rhea" id="RHEA-COMP:12159"/>
        <dbReference type="Rhea" id="RHEA-COMP:19907"/>
        <dbReference type="ChEBI" id="CHEBI:13193"/>
        <dbReference type="ChEBI" id="CHEBI:15378"/>
        <dbReference type="ChEBI" id="CHEBI:17499"/>
        <dbReference type="ChEBI" id="CHEBI:29950"/>
        <dbReference type="ChEBI" id="CHEBI:61963"/>
        <dbReference type="ChEBI" id="CHEBI:90618"/>
        <dbReference type="ChEBI" id="CHEBI:232372"/>
        <dbReference type="ChEBI" id="CHEBI:456215"/>
        <dbReference type="EC" id="2.8.1.11"/>
    </reaction>
</comment>
<comment type="cofactor">
    <cofactor evidence="3">
        <name>Zn(2+)</name>
        <dbReference type="ChEBI" id="CHEBI:29105"/>
    </cofactor>
    <text evidence="3">Binds 1 zinc ion per subunit.</text>
</comment>
<comment type="pathway">
    <text evidence="3">tRNA modification; 5-methoxycarbonylmethyl-2-thiouridine-tRNA biosynthesis.</text>
</comment>
<comment type="pathway">
    <text evidence="3">Cofactor biosynthesis; molybdopterin biosynthesis.</text>
</comment>
<comment type="subcellular location">
    <subcellularLocation>
        <location evidence="2">Cytoplasm</location>
        <location evidence="2">Cytosol</location>
    </subcellularLocation>
</comment>
<comment type="similarity">
    <text evidence="3">In the N-terminal section; belongs to the HesA/MoeB/ThiF family. UBA4 subfamily.</text>
</comment>
<comment type="sequence caution" evidence="6">
    <conflict type="erroneous initiation">
        <sequence resource="EMBL-CDS" id="AAC24520"/>
    </conflict>
    <text>Extended N-terminus.</text>
</comment>
<comment type="sequence caution" evidence="6">
    <conflict type="erroneous initiation">
        <sequence resource="EMBL-CDS" id="CBF86614"/>
    </conflict>
    <text>Extended N-terminus.</text>
</comment>
<comment type="sequence caution" evidence="6">
    <conflict type="erroneous initiation">
        <sequence resource="EMBL-CDS" id="EAA64438"/>
    </conflict>
    <text>Extended N-terminus.</text>
</comment>
<protein>
    <recommendedName>
        <fullName evidence="3">Adenylyltransferase and sulfurtransferase uba4</fullName>
    </recommendedName>
    <alternativeName>
        <fullName evidence="3">Common component for nitrate reductase and xanthine dehydrogenase protein F</fullName>
    </alternativeName>
    <alternativeName>
        <fullName evidence="3">Ubiquitin-like protein activator 4</fullName>
    </alternativeName>
    <domain>
        <recommendedName>
            <fullName evidence="3">Molybdopterin-synthase adenylyltransferase</fullName>
            <ecNumber evidence="3">2.7.7.80</ecNumber>
        </recommendedName>
        <alternativeName>
            <fullName evidence="3">Adenylyltransferase uba4</fullName>
        </alternativeName>
        <alternativeName>
            <fullName evidence="3">Sulfur carrier protein MOCS2A adenylyltransferase</fullName>
        </alternativeName>
    </domain>
    <domain>
        <recommendedName>
            <fullName evidence="3">Molybdopterin-synthase sulfurtransferase</fullName>
            <ecNumber evidence="3">2.8.1.11</ecNumber>
        </recommendedName>
        <alternativeName>
            <fullName evidence="3">Sulfur carrier protein MOCS2A sulfurtransferase</fullName>
        </alternativeName>
        <alternativeName>
            <fullName evidence="3">Sulfurtransferase uba4</fullName>
        </alternativeName>
    </domain>
</protein>